<keyword id="KW-0067">ATP-binding</keyword>
<keyword id="KW-0436">Ligase</keyword>
<keyword id="KW-0547">Nucleotide-binding</keyword>
<keyword id="KW-0658">Purine biosynthesis</keyword>
<accession>B7N658</accession>
<gene>
    <name evidence="1" type="primary">purC</name>
    <name type="ordered locus">ECUMN_2789</name>
</gene>
<comment type="catalytic activity">
    <reaction evidence="1">
        <text>5-amino-1-(5-phospho-D-ribosyl)imidazole-4-carboxylate + L-aspartate + ATP = (2S)-2-[5-amino-1-(5-phospho-beta-D-ribosyl)imidazole-4-carboxamido]succinate + ADP + phosphate + 2 H(+)</text>
        <dbReference type="Rhea" id="RHEA:22628"/>
        <dbReference type="ChEBI" id="CHEBI:15378"/>
        <dbReference type="ChEBI" id="CHEBI:29991"/>
        <dbReference type="ChEBI" id="CHEBI:30616"/>
        <dbReference type="ChEBI" id="CHEBI:43474"/>
        <dbReference type="ChEBI" id="CHEBI:58443"/>
        <dbReference type="ChEBI" id="CHEBI:77657"/>
        <dbReference type="ChEBI" id="CHEBI:456216"/>
        <dbReference type="EC" id="6.3.2.6"/>
    </reaction>
</comment>
<comment type="pathway">
    <text evidence="1">Purine metabolism; IMP biosynthesis via de novo pathway; 5-amino-1-(5-phospho-D-ribosyl)imidazole-4-carboxamide from 5-amino-1-(5-phospho-D-ribosyl)imidazole-4-carboxylate: step 1/2.</text>
</comment>
<comment type="similarity">
    <text evidence="1">Belongs to the SAICAR synthetase family.</text>
</comment>
<reference key="1">
    <citation type="journal article" date="2009" name="PLoS Genet.">
        <title>Organised genome dynamics in the Escherichia coli species results in highly diverse adaptive paths.</title>
        <authorList>
            <person name="Touchon M."/>
            <person name="Hoede C."/>
            <person name="Tenaillon O."/>
            <person name="Barbe V."/>
            <person name="Baeriswyl S."/>
            <person name="Bidet P."/>
            <person name="Bingen E."/>
            <person name="Bonacorsi S."/>
            <person name="Bouchier C."/>
            <person name="Bouvet O."/>
            <person name="Calteau A."/>
            <person name="Chiapello H."/>
            <person name="Clermont O."/>
            <person name="Cruveiller S."/>
            <person name="Danchin A."/>
            <person name="Diard M."/>
            <person name="Dossat C."/>
            <person name="Karoui M.E."/>
            <person name="Frapy E."/>
            <person name="Garry L."/>
            <person name="Ghigo J.M."/>
            <person name="Gilles A.M."/>
            <person name="Johnson J."/>
            <person name="Le Bouguenec C."/>
            <person name="Lescat M."/>
            <person name="Mangenot S."/>
            <person name="Martinez-Jehanne V."/>
            <person name="Matic I."/>
            <person name="Nassif X."/>
            <person name="Oztas S."/>
            <person name="Petit M.A."/>
            <person name="Pichon C."/>
            <person name="Rouy Z."/>
            <person name="Ruf C.S."/>
            <person name="Schneider D."/>
            <person name="Tourret J."/>
            <person name="Vacherie B."/>
            <person name="Vallenet D."/>
            <person name="Medigue C."/>
            <person name="Rocha E.P.C."/>
            <person name="Denamur E."/>
        </authorList>
    </citation>
    <scope>NUCLEOTIDE SEQUENCE [LARGE SCALE GENOMIC DNA]</scope>
    <source>
        <strain>UMN026 / ExPEC</strain>
    </source>
</reference>
<proteinExistence type="inferred from homology"/>
<feature type="chain" id="PRO_1000117834" description="Phosphoribosylaminoimidazole-succinocarboxamide synthase">
    <location>
        <begin position="1"/>
        <end position="237"/>
    </location>
</feature>
<evidence type="ECO:0000255" key="1">
    <source>
        <dbReference type="HAMAP-Rule" id="MF_00137"/>
    </source>
</evidence>
<dbReference type="EC" id="6.3.2.6" evidence="1"/>
<dbReference type="EMBL" id="CU928163">
    <property type="protein sequence ID" value="CAR13967.1"/>
    <property type="molecule type" value="Genomic_DNA"/>
</dbReference>
<dbReference type="RefSeq" id="WP_001295467.1">
    <property type="nucleotide sequence ID" value="NC_011751.1"/>
</dbReference>
<dbReference type="RefSeq" id="YP_002413494.1">
    <property type="nucleotide sequence ID" value="NC_011751.1"/>
</dbReference>
<dbReference type="SMR" id="B7N658"/>
<dbReference type="STRING" id="585056.ECUMN_2789"/>
<dbReference type="GeneID" id="89517285"/>
<dbReference type="KEGG" id="eum:ECUMN_2789"/>
<dbReference type="PATRIC" id="fig|585056.7.peg.2973"/>
<dbReference type="HOGENOM" id="CLU_061495_2_1_6"/>
<dbReference type="UniPathway" id="UPA00074">
    <property type="reaction ID" value="UER00131"/>
</dbReference>
<dbReference type="Proteomes" id="UP000007097">
    <property type="component" value="Chromosome"/>
</dbReference>
<dbReference type="GO" id="GO:0005829">
    <property type="term" value="C:cytosol"/>
    <property type="evidence" value="ECO:0007669"/>
    <property type="project" value="TreeGrafter"/>
</dbReference>
<dbReference type="GO" id="GO:0005524">
    <property type="term" value="F:ATP binding"/>
    <property type="evidence" value="ECO:0007669"/>
    <property type="project" value="UniProtKB-KW"/>
</dbReference>
<dbReference type="GO" id="GO:0004639">
    <property type="term" value="F:phosphoribosylaminoimidazolesuccinocarboxamide synthase activity"/>
    <property type="evidence" value="ECO:0007669"/>
    <property type="project" value="UniProtKB-UniRule"/>
</dbReference>
<dbReference type="GO" id="GO:0006189">
    <property type="term" value="P:'de novo' IMP biosynthetic process"/>
    <property type="evidence" value="ECO:0007669"/>
    <property type="project" value="UniProtKB-UniRule"/>
</dbReference>
<dbReference type="GO" id="GO:0009236">
    <property type="term" value="P:cobalamin biosynthetic process"/>
    <property type="evidence" value="ECO:0007669"/>
    <property type="project" value="InterPro"/>
</dbReference>
<dbReference type="CDD" id="cd01415">
    <property type="entry name" value="SAICAR_synt_PurC"/>
    <property type="match status" value="1"/>
</dbReference>
<dbReference type="FunFam" id="3.30.200.20:FF:000086">
    <property type="entry name" value="Phosphoribosylaminoimidazole-succinocarboxamide synthase"/>
    <property type="match status" value="1"/>
</dbReference>
<dbReference type="FunFam" id="3.30.470.20:FF:000006">
    <property type="entry name" value="Phosphoribosylaminoimidazole-succinocarboxamide synthase"/>
    <property type="match status" value="1"/>
</dbReference>
<dbReference type="Gene3D" id="3.30.470.20">
    <property type="entry name" value="ATP-grasp fold, B domain"/>
    <property type="match status" value="1"/>
</dbReference>
<dbReference type="Gene3D" id="3.30.200.20">
    <property type="entry name" value="Phosphorylase Kinase, domain 1"/>
    <property type="match status" value="1"/>
</dbReference>
<dbReference type="HAMAP" id="MF_00137">
    <property type="entry name" value="SAICAR_synth"/>
    <property type="match status" value="1"/>
</dbReference>
<dbReference type="InterPro" id="IPR028923">
    <property type="entry name" value="SAICAR_synt/ADE2_N"/>
</dbReference>
<dbReference type="InterPro" id="IPR033934">
    <property type="entry name" value="SAICAR_synt_PurC"/>
</dbReference>
<dbReference type="InterPro" id="IPR001636">
    <property type="entry name" value="SAICAR_synth"/>
</dbReference>
<dbReference type="InterPro" id="IPR050089">
    <property type="entry name" value="SAICAR_synthetase"/>
</dbReference>
<dbReference type="InterPro" id="IPR018236">
    <property type="entry name" value="SAICAR_synthetase_CS"/>
</dbReference>
<dbReference type="NCBIfam" id="TIGR00081">
    <property type="entry name" value="purC"/>
    <property type="match status" value="1"/>
</dbReference>
<dbReference type="PANTHER" id="PTHR43599">
    <property type="entry name" value="MULTIFUNCTIONAL PROTEIN ADE2"/>
    <property type="match status" value="1"/>
</dbReference>
<dbReference type="PANTHER" id="PTHR43599:SF3">
    <property type="entry name" value="SI:DKEY-6E2.2"/>
    <property type="match status" value="1"/>
</dbReference>
<dbReference type="Pfam" id="PF01259">
    <property type="entry name" value="SAICAR_synt"/>
    <property type="match status" value="1"/>
</dbReference>
<dbReference type="SUPFAM" id="SSF56104">
    <property type="entry name" value="SAICAR synthase-like"/>
    <property type="match status" value="1"/>
</dbReference>
<dbReference type="PROSITE" id="PS01057">
    <property type="entry name" value="SAICAR_SYNTHETASE_1"/>
    <property type="match status" value="1"/>
</dbReference>
<dbReference type="PROSITE" id="PS01058">
    <property type="entry name" value="SAICAR_SYNTHETASE_2"/>
    <property type="match status" value="1"/>
</dbReference>
<name>PUR7_ECOLU</name>
<sequence length="237" mass="26995">MQKQAELYRGKAKTVYSTENPDLLVLEFRNDTSAGDGARIEQFDRKGMVNNKFNYFIMSKLAEAGIPTQMERLLSDTECLVKKLDMVPVECVVRNRAAGSLVKRLGIEEGIELNPPLFDLFLKNDAMHDPMVNESYCETFGWVSKENLARMKELTYKANDVLKKLFDDAGLILVDFKLEFGLYKGEVVLGDEFSPDGSRLWDKETLEKMDKDRFRQSLGGLIEAYEAVARRLGVQLD</sequence>
<organism>
    <name type="scientific">Escherichia coli O17:K52:H18 (strain UMN026 / ExPEC)</name>
    <dbReference type="NCBI Taxonomy" id="585056"/>
    <lineage>
        <taxon>Bacteria</taxon>
        <taxon>Pseudomonadati</taxon>
        <taxon>Pseudomonadota</taxon>
        <taxon>Gammaproteobacteria</taxon>
        <taxon>Enterobacterales</taxon>
        <taxon>Enterobacteriaceae</taxon>
        <taxon>Escherichia</taxon>
    </lineage>
</organism>
<protein>
    <recommendedName>
        <fullName evidence="1">Phosphoribosylaminoimidazole-succinocarboxamide synthase</fullName>
        <ecNumber evidence="1">6.3.2.6</ecNumber>
    </recommendedName>
    <alternativeName>
        <fullName evidence="1">SAICAR synthetase</fullName>
    </alternativeName>
</protein>